<keyword id="KW-0131">Cell cycle</keyword>
<keyword id="KW-0132">Cell division</keyword>
<keyword id="KW-0133">Cell shape</keyword>
<keyword id="KW-0961">Cell wall biogenesis/degradation</keyword>
<keyword id="KW-0963">Cytoplasm</keyword>
<keyword id="KW-0573">Peptidoglycan synthesis</keyword>
<keyword id="KW-0670">Pyruvate</keyword>
<keyword id="KW-1185">Reference proteome</keyword>
<keyword id="KW-0808">Transferase</keyword>
<protein>
    <recommendedName>
        <fullName evidence="1">UDP-N-acetylglucosamine 1-carboxyvinyltransferase</fullName>
        <ecNumber evidence="1">2.5.1.7</ecNumber>
    </recommendedName>
    <alternativeName>
        <fullName evidence="1">Enoylpyruvate transferase</fullName>
    </alternativeName>
    <alternativeName>
        <fullName evidence="1">UDP-N-acetylglucosamine enolpyruvyl transferase</fullName>
        <shortName evidence="1">EPT</shortName>
    </alternativeName>
</protein>
<accession>B4SEZ5</accession>
<dbReference type="EC" id="2.5.1.7" evidence="1"/>
<dbReference type="EMBL" id="CP001110">
    <property type="protein sequence ID" value="ACF43142.1"/>
    <property type="molecule type" value="Genomic_DNA"/>
</dbReference>
<dbReference type="RefSeq" id="WP_012507637.1">
    <property type="nucleotide sequence ID" value="NC_011060.1"/>
</dbReference>
<dbReference type="SMR" id="B4SEZ5"/>
<dbReference type="STRING" id="324925.Ppha_0854"/>
<dbReference type="KEGG" id="pph:Ppha_0854"/>
<dbReference type="eggNOG" id="COG0766">
    <property type="taxonomic scope" value="Bacteria"/>
</dbReference>
<dbReference type="HOGENOM" id="CLU_027387_0_0_10"/>
<dbReference type="OrthoDB" id="9803760at2"/>
<dbReference type="UniPathway" id="UPA00219"/>
<dbReference type="Proteomes" id="UP000002724">
    <property type="component" value="Chromosome"/>
</dbReference>
<dbReference type="GO" id="GO:0005737">
    <property type="term" value="C:cytoplasm"/>
    <property type="evidence" value="ECO:0007669"/>
    <property type="project" value="UniProtKB-SubCell"/>
</dbReference>
<dbReference type="GO" id="GO:0008760">
    <property type="term" value="F:UDP-N-acetylglucosamine 1-carboxyvinyltransferase activity"/>
    <property type="evidence" value="ECO:0007669"/>
    <property type="project" value="UniProtKB-UniRule"/>
</dbReference>
<dbReference type="GO" id="GO:0051301">
    <property type="term" value="P:cell division"/>
    <property type="evidence" value="ECO:0007669"/>
    <property type="project" value="UniProtKB-KW"/>
</dbReference>
<dbReference type="GO" id="GO:0071555">
    <property type="term" value="P:cell wall organization"/>
    <property type="evidence" value="ECO:0007669"/>
    <property type="project" value="UniProtKB-KW"/>
</dbReference>
<dbReference type="GO" id="GO:0009252">
    <property type="term" value="P:peptidoglycan biosynthetic process"/>
    <property type="evidence" value="ECO:0007669"/>
    <property type="project" value="UniProtKB-UniRule"/>
</dbReference>
<dbReference type="GO" id="GO:0008360">
    <property type="term" value="P:regulation of cell shape"/>
    <property type="evidence" value="ECO:0007669"/>
    <property type="project" value="UniProtKB-KW"/>
</dbReference>
<dbReference type="GO" id="GO:0019277">
    <property type="term" value="P:UDP-N-acetylgalactosamine biosynthetic process"/>
    <property type="evidence" value="ECO:0007669"/>
    <property type="project" value="InterPro"/>
</dbReference>
<dbReference type="CDD" id="cd01555">
    <property type="entry name" value="UdpNAET"/>
    <property type="match status" value="1"/>
</dbReference>
<dbReference type="FunFam" id="3.65.10.10:FF:000001">
    <property type="entry name" value="UDP-N-acetylglucosamine 1-carboxyvinyltransferase"/>
    <property type="match status" value="1"/>
</dbReference>
<dbReference type="Gene3D" id="3.65.10.10">
    <property type="entry name" value="Enolpyruvate transferase domain"/>
    <property type="match status" value="2"/>
</dbReference>
<dbReference type="HAMAP" id="MF_00111">
    <property type="entry name" value="MurA"/>
    <property type="match status" value="1"/>
</dbReference>
<dbReference type="InterPro" id="IPR001986">
    <property type="entry name" value="Enolpyruvate_Tfrase_dom"/>
</dbReference>
<dbReference type="InterPro" id="IPR036968">
    <property type="entry name" value="Enolpyruvate_Tfrase_sf"/>
</dbReference>
<dbReference type="InterPro" id="IPR050068">
    <property type="entry name" value="MurA_subfamily"/>
</dbReference>
<dbReference type="InterPro" id="IPR013792">
    <property type="entry name" value="RNA3'P_cycl/enolpyr_Trfase_a/b"/>
</dbReference>
<dbReference type="InterPro" id="IPR005750">
    <property type="entry name" value="UDP_GlcNAc_COvinyl_MurA"/>
</dbReference>
<dbReference type="NCBIfam" id="TIGR01072">
    <property type="entry name" value="murA"/>
    <property type="match status" value="1"/>
</dbReference>
<dbReference type="NCBIfam" id="NF006873">
    <property type="entry name" value="PRK09369.1"/>
    <property type="match status" value="1"/>
</dbReference>
<dbReference type="PANTHER" id="PTHR43783">
    <property type="entry name" value="UDP-N-ACETYLGLUCOSAMINE 1-CARBOXYVINYLTRANSFERASE"/>
    <property type="match status" value="1"/>
</dbReference>
<dbReference type="PANTHER" id="PTHR43783:SF1">
    <property type="entry name" value="UDP-N-ACETYLGLUCOSAMINE 1-CARBOXYVINYLTRANSFERASE"/>
    <property type="match status" value="1"/>
</dbReference>
<dbReference type="Pfam" id="PF00275">
    <property type="entry name" value="EPSP_synthase"/>
    <property type="match status" value="1"/>
</dbReference>
<dbReference type="SUPFAM" id="SSF55205">
    <property type="entry name" value="EPT/RTPC-like"/>
    <property type="match status" value="1"/>
</dbReference>
<evidence type="ECO:0000255" key="1">
    <source>
        <dbReference type="HAMAP-Rule" id="MF_00111"/>
    </source>
</evidence>
<organism>
    <name type="scientific">Pelodictyon phaeoclathratiforme (strain DSM 5477 / BU-1)</name>
    <dbReference type="NCBI Taxonomy" id="324925"/>
    <lineage>
        <taxon>Bacteria</taxon>
        <taxon>Pseudomonadati</taxon>
        <taxon>Chlorobiota</taxon>
        <taxon>Chlorobiia</taxon>
        <taxon>Chlorobiales</taxon>
        <taxon>Chlorobiaceae</taxon>
        <taxon>Chlorobium/Pelodictyon group</taxon>
        <taxon>Pelodictyon</taxon>
    </lineage>
</organism>
<comment type="function">
    <text evidence="1">Cell wall formation. Adds enolpyruvyl to UDP-N-acetylglucosamine.</text>
</comment>
<comment type="catalytic activity">
    <reaction evidence="1">
        <text>phosphoenolpyruvate + UDP-N-acetyl-alpha-D-glucosamine = UDP-N-acetyl-3-O-(1-carboxyvinyl)-alpha-D-glucosamine + phosphate</text>
        <dbReference type="Rhea" id="RHEA:18681"/>
        <dbReference type="ChEBI" id="CHEBI:43474"/>
        <dbReference type="ChEBI" id="CHEBI:57705"/>
        <dbReference type="ChEBI" id="CHEBI:58702"/>
        <dbReference type="ChEBI" id="CHEBI:68483"/>
        <dbReference type="EC" id="2.5.1.7"/>
    </reaction>
</comment>
<comment type="pathway">
    <text evidence="1">Cell wall biogenesis; peptidoglycan biosynthesis.</text>
</comment>
<comment type="subcellular location">
    <subcellularLocation>
        <location evidence="1">Cytoplasm</location>
    </subcellularLocation>
</comment>
<comment type="similarity">
    <text evidence="1">Belongs to the EPSP synthase family. MurA subfamily.</text>
</comment>
<feature type="chain" id="PRO_1000094707" description="UDP-N-acetylglucosamine 1-carboxyvinyltransferase">
    <location>
        <begin position="1"/>
        <end position="424"/>
    </location>
</feature>
<feature type="active site" description="Proton donor" evidence="1">
    <location>
        <position position="117"/>
    </location>
</feature>
<feature type="binding site" evidence="1">
    <location>
        <begin position="22"/>
        <end position="23"/>
    </location>
    <ligand>
        <name>phosphoenolpyruvate</name>
        <dbReference type="ChEBI" id="CHEBI:58702"/>
    </ligand>
</feature>
<feature type="binding site" evidence="1">
    <location>
        <position position="93"/>
    </location>
    <ligand>
        <name>UDP-N-acetyl-alpha-D-glucosamine</name>
        <dbReference type="ChEBI" id="CHEBI:57705"/>
    </ligand>
</feature>
<feature type="binding site" evidence="1">
    <location>
        <begin position="122"/>
        <end position="126"/>
    </location>
    <ligand>
        <name>UDP-N-acetyl-alpha-D-glucosamine</name>
        <dbReference type="ChEBI" id="CHEBI:57705"/>
    </ligand>
</feature>
<feature type="binding site" evidence="1">
    <location>
        <position position="307"/>
    </location>
    <ligand>
        <name>UDP-N-acetyl-alpha-D-glucosamine</name>
        <dbReference type="ChEBI" id="CHEBI:57705"/>
    </ligand>
</feature>
<feature type="binding site" evidence="1">
    <location>
        <position position="329"/>
    </location>
    <ligand>
        <name>UDP-N-acetyl-alpha-D-glucosamine</name>
        <dbReference type="ChEBI" id="CHEBI:57705"/>
    </ligand>
</feature>
<feature type="modified residue" description="2-(S-cysteinyl)pyruvic acid O-phosphothioketal" evidence="1">
    <location>
        <position position="117"/>
    </location>
</feature>
<sequence length="424" mass="45397">MDKLVIKGGSRISGTITASGSKNTSLPIIAATLLTGNGTFTLHHIPDLKDIVTFTQLLHHLGAETTYEGNTLKVSSRNVQSLQAPYELVKKMRASIYVLGPMLARFGHARVSLPGGCAFGPRPIDLHLMAMEKLGATITIETGFIDATIPGGKLQGGHITFPISSVGATGNALMAAVLAEGTTTISNAAAEPEIETLCKFLIAMGATIRGTGTTELEIEGCNTLKAIEFKNVFDRIEAGTLLAAAAITGGDITVNGVEPEQMKAVLKKFVHAGCLVETTDNSITLKSPKKLIPTDVTAKPYPAFPTDMQAQWIALMTQAEGSSHITDKVYHERFNHIPELNRLGAHIEIHKNQAIVHGPQQLSGTKVMSTDLRASASLVLAGLVAEGTTEVLRVYHLDRGYEKIEIKLNSLGADISREKYDEFH</sequence>
<gene>
    <name evidence="1" type="primary">murA</name>
    <name type="ordered locus">Ppha_0854</name>
</gene>
<proteinExistence type="inferred from homology"/>
<name>MURA_PELPB</name>
<reference key="1">
    <citation type="submission" date="2008-06" db="EMBL/GenBank/DDBJ databases">
        <title>Complete sequence of Pelodictyon phaeoclathratiforme BU-1.</title>
        <authorList>
            <consortium name="US DOE Joint Genome Institute"/>
            <person name="Lucas S."/>
            <person name="Copeland A."/>
            <person name="Lapidus A."/>
            <person name="Glavina del Rio T."/>
            <person name="Dalin E."/>
            <person name="Tice H."/>
            <person name="Bruce D."/>
            <person name="Goodwin L."/>
            <person name="Pitluck S."/>
            <person name="Schmutz J."/>
            <person name="Larimer F."/>
            <person name="Land M."/>
            <person name="Hauser L."/>
            <person name="Kyrpides N."/>
            <person name="Mikhailova N."/>
            <person name="Liu Z."/>
            <person name="Li T."/>
            <person name="Zhao F."/>
            <person name="Overmann J."/>
            <person name="Bryant D.A."/>
            <person name="Richardson P."/>
        </authorList>
    </citation>
    <scope>NUCLEOTIDE SEQUENCE [LARGE SCALE GENOMIC DNA]</scope>
    <source>
        <strain>DSM 5477 / BU-1</strain>
    </source>
</reference>